<comment type="function">
    <text evidence="1">With S4 and S12 plays an important role in translational accuracy.</text>
</comment>
<comment type="function">
    <text evidence="1">Located at the back of the 30S subunit body where it stabilizes the conformation of the head with respect to the body.</text>
</comment>
<comment type="subunit">
    <text evidence="1">Part of the 30S ribosomal subunit. Contacts proteins S4 and S8.</text>
</comment>
<comment type="domain">
    <text>The N-terminal domain interacts with the head of the 30S subunit; the C-terminal domain interacts with the body and contacts protein S4. The interaction surface between S4 and S5 is involved in control of translational fidelity.</text>
</comment>
<comment type="similarity">
    <text evidence="1">Belongs to the universal ribosomal protein uS5 family.</text>
</comment>
<dbReference type="EMBL" id="AE016827">
    <property type="protein sequence ID" value="AAU38638.1"/>
    <property type="molecule type" value="Genomic_DNA"/>
</dbReference>
<dbReference type="RefSeq" id="WP_011201189.1">
    <property type="nucleotide sequence ID" value="NC_006300.1"/>
</dbReference>
<dbReference type="SMR" id="Q65QX2"/>
<dbReference type="STRING" id="221988.MS2031"/>
<dbReference type="KEGG" id="msu:MS2031"/>
<dbReference type="eggNOG" id="COG0098">
    <property type="taxonomic scope" value="Bacteria"/>
</dbReference>
<dbReference type="HOGENOM" id="CLU_065898_2_2_6"/>
<dbReference type="OrthoDB" id="9809045at2"/>
<dbReference type="Proteomes" id="UP000000607">
    <property type="component" value="Chromosome"/>
</dbReference>
<dbReference type="GO" id="GO:0015935">
    <property type="term" value="C:small ribosomal subunit"/>
    <property type="evidence" value="ECO:0007669"/>
    <property type="project" value="InterPro"/>
</dbReference>
<dbReference type="GO" id="GO:0019843">
    <property type="term" value="F:rRNA binding"/>
    <property type="evidence" value="ECO:0007669"/>
    <property type="project" value="UniProtKB-UniRule"/>
</dbReference>
<dbReference type="GO" id="GO:0003735">
    <property type="term" value="F:structural constituent of ribosome"/>
    <property type="evidence" value="ECO:0007669"/>
    <property type="project" value="InterPro"/>
</dbReference>
<dbReference type="GO" id="GO:0006412">
    <property type="term" value="P:translation"/>
    <property type="evidence" value="ECO:0007669"/>
    <property type="project" value="UniProtKB-UniRule"/>
</dbReference>
<dbReference type="FunFam" id="3.30.160.20:FF:000001">
    <property type="entry name" value="30S ribosomal protein S5"/>
    <property type="match status" value="1"/>
</dbReference>
<dbReference type="FunFam" id="3.30.230.10:FF:000002">
    <property type="entry name" value="30S ribosomal protein S5"/>
    <property type="match status" value="1"/>
</dbReference>
<dbReference type="Gene3D" id="3.30.160.20">
    <property type="match status" value="1"/>
</dbReference>
<dbReference type="Gene3D" id="3.30.230.10">
    <property type="match status" value="1"/>
</dbReference>
<dbReference type="HAMAP" id="MF_01307_B">
    <property type="entry name" value="Ribosomal_uS5_B"/>
    <property type="match status" value="1"/>
</dbReference>
<dbReference type="InterPro" id="IPR020568">
    <property type="entry name" value="Ribosomal_Su5_D2-typ_SF"/>
</dbReference>
<dbReference type="InterPro" id="IPR000851">
    <property type="entry name" value="Ribosomal_uS5"/>
</dbReference>
<dbReference type="InterPro" id="IPR005712">
    <property type="entry name" value="Ribosomal_uS5_bac-type"/>
</dbReference>
<dbReference type="InterPro" id="IPR005324">
    <property type="entry name" value="Ribosomal_uS5_C"/>
</dbReference>
<dbReference type="InterPro" id="IPR013810">
    <property type="entry name" value="Ribosomal_uS5_N"/>
</dbReference>
<dbReference type="InterPro" id="IPR018192">
    <property type="entry name" value="Ribosomal_uS5_N_CS"/>
</dbReference>
<dbReference type="InterPro" id="IPR014721">
    <property type="entry name" value="Ribsml_uS5_D2-typ_fold_subgr"/>
</dbReference>
<dbReference type="NCBIfam" id="TIGR01021">
    <property type="entry name" value="rpsE_bact"/>
    <property type="match status" value="1"/>
</dbReference>
<dbReference type="PANTHER" id="PTHR48277">
    <property type="entry name" value="MITOCHONDRIAL RIBOSOMAL PROTEIN S5"/>
    <property type="match status" value="1"/>
</dbReference>
<dbReference type="PANTHER" id="PTHR48277:SF1">
    <property type="entry name" value="MITOCHONDRIAL RIBOSOMAL PROTEIN S5"/>
    <property type="match status" value="1"/>
</dbReference>
<dbReference type="Pfam" id="PF00333">
    <property type="entry name" value="Ribosomal_S5"/>
    <property type="match status" value="1"/>
</dbReference>
<dbReference type="Pfam" id="PF03719">
    <property type="entry name" value="Ribosomal_S5_C"/>
    <property type="match status" value="1"/>
</dbReference>
<dbReference type="SUPFAM" id="SSF54768">
    <property type="entry name" value="dsRNA-binding domain-like"/>
    <property type="match status" value="1"/>
</dbReference>
<dbReference type="SUPFAM" id="SSF54211">
    <property type="entry name" value="Ribosomal protein S5 domain 2-like"/>
    <property type="match status" value="1"/>
</dbReference>
<dbReference type="PROSITE" id="PS00585">
    <property type="entry name" value="RIBOSOMAL_S5"/>
    <property type="match status" value="1"/>
</dbReference>
<dbReference type="PROSITE" id="PS50881">
    <property type="entry name" value="S5_DSRBD"/>
    <property type="match status" value="1"/>
</dbReference>
<reference key="1">
    <citation type="journal article" date="2004" name="Nat. Biotechnol.">
        <title>The genome sequence of the capnophilic rumen bacterium Mannheimia succiniciproducens.</title>
        <authorList>
            <person name="Hong S.H."/>
            <person name="Kim J.S."/>
            <person name="Lee S.Y."/>
            <person name="In Y.H."/>
            <person name="Choi S.S."/>
            <person name="Rih J.-K."/>
            <person name="Kim C.H."/>
            <person name="Jeong H."/>
            <person name="Hur C.G."/>
            <person name="Kim J.J."/>
        </authorList>
    </citation>
    <scope>NUCLEOTIDE SEQUENCE [LARGE SCALE GENOMIC DNA]</scope>
    <source>
        <strain>KCTC 0769BP / MBEL55E</strain>
    </source>
</reference>
<organism>
    <name type="scientific">Mannheimia succiniciproducens (strain KCTC 0769BP / MBEL55E)</name>
    <dbReference type="NCBI Taxonomy" id="221988"/>
    <lineage>
        <taxon>Bacteria</taxon>
        <taxon>Pseudomonadati</taxon>
        <taxon>Pseudomonadota</taxon>
        <taxon>Gammaproteobacteria</taxon>
        <taxon>Pasteurellales</taxon>
        <taxon>Pasteurellaceae</taxon>
        <taxon>Basfia</taxon>
    </lineage>
</organism>
<proteinExistence type="inferred from homology"/>
<evidence type="ECO:0000255" key="1">
    <source>
        <dbReference type="HAMAP-Rule" id="MF_01307"/>
    </source>
</evidence>
<evidence type="ECO:0000305" key="2"/>
<sequence length="166" mass="17493">MANIEKQAGELQEKLIAVNRVSKTVKGGRIMSFTALTVVGDGNGRVGFGYGKAREVPAAIQKAMEKARRNMINVALHEGTLQHPVKGIHTGSRVFMQPASEGTGIIAGGAMRAVLEVAGVRNVLSKAYGSTNPINVVRATIDALANMKSPEMVAAKRGKTVDEILG</sequence>
<accession>Q65QX2</accession>
<keyword id="KW-0687">Ribonucleoprotein</keyword>
<keyword id="KW-0689">Ribosomal protein</keyword>
<keyword id="KW-0694">RNA-binding</keyword>
<keyword id="KW-0699">rRNA-binding</keyword>
<name>RS5_MANSM</name>
<protein>
    <recommendedName>
        <fullName evidence="1">Small ribosomal subunit protein uS5</fullName>
    </recommendedName>
    <alternativeName>
        <fullName evidence="2">30S ribosomal protein S5</fullName>
    </alternativeName>
</protein>
<gene>
    <name evidence="1" type="primary">rpsE</name>
    <name type="ordered locus">MS2031</name>
</gene>
<feature type="chain" id="PRO_0000131541" description="Small ribosomal subunit protein uS5">
    <location>
        <begin position="1"/>
        <end position="166"/>
    </location>
</feature>
<feature type="domain" description="S5 DRBM" evidence="1">
    <location>
        <begin position="11"/>
        <end position="74"/>
    </location>
</feature>